<gene>
    <name type="primary">CLEB3J9</name>
</gene>
<comment type="subcellular location">
    <subcellularLocation>
        <location evidence="3">Plastid</location>
        <location evidence="3">Chloroplast thylakoid lumen</location>
    </subcellularLocation>
</comment>
<comment type="similarity">
    <text evidence="4">Belongs to the peroxidase family.</text>
</comment>
<comment type="caution">
    <text evidence="4">Probably not an ascorbate peroxidase (APx), as it lacks the heme-binding site, the proton acceptor and the transition state stabilizer, which are conserved features of the ascorbate peroxidase.</text>
</comment>
<sequence>MVSFASTLPSLVSFIPSPSSITNASRNPPQPGMICCKFRSELNNEDRFHRRDILQSVGAAVGMDLIARSSAFIEVANAADLIQRRQRSDFQSKIKLTLYDAIKANPDIIPSLLTLALNDAITYDKATKTGGPNGSIRFSSEISRPENKGLDAALNLLEESKKVIDLDSKGGPISYADLIQFAAQSAVKSTFIASAISKCGGNVEKGTLLYSAYGSNGQWGQFDRIFGRSDAQEPDPEGRVPQWDKASVQEMKDKFKAVGLGPRQLAVMSSFLGPDQAATEALLASDPEVLPWIQKYQRSRETVSRTDYEVDLITTVTKLSSLGQVINYEAYTYPPRKIDVTKLKL</sequence>
<feature type="transit peptide" description="Chloroplast" evidence="2">
    <location>
        <begin position="1"/>
        <end status="unknown"/>
    </location>
</feature>
<feature type="transit peptide" description="Thylakoid" evidence="1">
    <location>
        <begin status="unknown"/>
        <end position="78"/>
    </location>
</feature>
<feature type="chain" id="PRO_0000023636" description="Thylakoid lumenal 29 kDa protein, chloroplastic">
    <location>
        <begin position="79"/>
        <end position="345"/>
    </location>
</feature>
<proteinExistence type="inferred from homology"/>
<name>TL29_SOLLC</name>
<organism>
    <name type="scientific">Solanum lycopersicum</name>
    <name type="common">Tomato</name>
    <name type="synonym">Lycopersicon esculentum</name>
    <dbReference type="NCBI Taxonomy" id="4081"/>
    <lineage>
        <taxon>Eukaryota</taxon>
        <taxon>Viridiplantae</taxon>
        <taxon>Streptophyta</taxon>
        <taxon>Embryophyta</taxon>
        <taxon>Tracheophyta</taxon>
        <taxon>Spermatophyta</taxon>
        <taxon>Magnoliopsida</taxon>
        <taxon>eudicotyledons</taxon>
        <taxon>Gunneridae</taxon>
        <taxon>Pentapetalae</taxon>
        <taxon>asterids</taxon>
        <taxon>lamiids</taxon>
        <taxon>Solanales</taxon>
        <taxon>Solanaceae</taxon>
        <taxon>Solanoideae</taxon>
        <taxon>Solaneae</taxon>
        <taxon>Solanum</taxon>
        <taxon>Solanum subgen. Lycopersicon</taxon>
    </lineage>
</organism>
<protein>
    <recommendedName>
        <fullName>Thylakoid lumenal 29 kDa protein, chloroplastic</fullName>
        <shortName>TL29</shortName>
        <ecNumber>1.-.-.-</ecNumber>
    </recommendedName>
    <alternativeName>
        <fullName>LeAPx09</fullName>
    </alternativeName>
    <alternativeName>
        <fullName>P29</fullName>
    </alternativeName>
</protein>
<evidence type="ECO:0000250" key="1"/>
<evidence type="ECO:0000255" key="2"/>
<evidence type="ECO:0000269" key="3">
    <source>
    </source>
</evidence>
<evidence type="ECO:0000305" key="4"/>
<reference key="1">
    <citation type="journal article" date="2000" name="FEBS Lett.">
        <title>A peroxidase homologue and novel plastocyanin located by proteomics to the Arabidopsis chloroplast thylakoid lumen.</title>
        <authorList>
            <person name="Kieselbach T."/>
            <person name="Bystedt M."/>
            <person name="Hynds P."/>
            <person name="Robinson C."/>
            <person name="Schroeder W.P."/>
        </authorList>
    </citation>
    <scope>NUCLEOTIDE SEQUENCE [GENOMIC DNA]</scope>
    <scope>SUBCELLULAR LOCATION</scope>
</reference>
<keyword id="KW-0150">Chloroplast</keyword>
<keyword id="KW-0560">Oxidoreductase</keyword>
<keyword id="KW-0934">Plastid</keyword>
<keyword id="KW-1185">Reference proteome</keyword>
<keyword id="KW-0793">Thylakoid</keyword>
<keyword id="KW-0809">Transit peptide</keyword>
<accession>Q9THX6</accession>
<dbReference type="EC" id="1.-.-.-"/>
<dbReference type="EMBL" id="AJ251882">
    <property type="protein sequence ID" value="CAB64343.1"/>
    <property type="molecule type" value="Genomic_DNA"/>
</dbReference>
<dbReference type="SMR" id="Q9THX6"/>
<dbReference type="FunCoup" id="Q9THX6">
    <property type="interactions" value="1390"/>
</dbReference>
<dbReference type="STRING" id="4081.Q9THX6"/>
<dbReference type="PeroxiBase" id="3921">
    <property type="entry name" value="LeAPx09"/>
</dbReference>
<dbReference type="PaxDb" id="4081-Solyc04g074640.2.1"/>
<dbReference type="eggNOG" id="ENOG502QR5T">
    <property type="taxonomic scope" value="Eukaryota"/>
</dbReference>
<dbReference type="InParanoid" id="Q9THX6"/>
<dbReference type="Proteomes" id="UP000004994">
    <property type="component" value="Unplaced"/>
</dbReference>
<dbReference type="ExpressionAtlas" id="Q9THX6">
    <property type="expression patterns" value="baseline and differential"/>
</dbReference>
<dbReference type="GO" id="GO:0009543">
    <property type="term" value="C:chloroplast thylakoid lumen"/>
    <property type="evidence" value="ECO:0007669"/>
    <property type="project" value="UniProtKB-SubCell"/>
</dbReference>
<dbReference type="GO" id="GO:0020037">
    <property type="term" value="F:heme binding"/>
    <property type="evidence" value="ECO:0007669"/>
    <property type="project" value="InterPro"/>
</dbReference>
<dbReference type="GO" id="GO:0004601">
    <property type="term" value="F:peroxidase activity"/>
    <property type="evidence" value="ECO:0000318"/>
    <property type="project" value="GO_Central"/>
</dbReference>
<dbReference type="GO" id="GO:0034599">
    <property type="term" value="P:cellular response to oxidative stress"/>
    <property type="evidence" value="ECO:0000318"/>
    <property type="project" value="GO_Central"/>
</dbReference>
<dbReference type="GO" id="GO:0042744">
    <property type="term" value="P:hydrogen peroxide catabolic process"/>
    <property type="evidence" value="ECO:0000318"/>
    <property type="project" value="GO_Central"/>
</dbReference>
<dbReference type="GO" id="GO:0000302">
    <property type="term" value="P:response to reactive oxygen species"/>
    <property type="evidence" value="ECO:0000318"/>
    <property type="project" value="GO_Central"/>
</dbReference>
<dbReference type="CDD" id="cd00314">
    <property type="entry name" value="plant_peroxidase_like"/>
    <property type="match status" value="1"/>
</dbReference>
<dbReference type="FunFam" id="1.20.58.1620:FF:000001">
    <property type="entry name" value="Thylakoid lumenal 29 kDa protein, chloroplastic"/>
    <property type="match status" value="1"/>
</dbReference>
<dbReference type="FunFam" id="1.10.520.10:FF:000013">
    <property type="entry name" value="thylakoid lumenal 29 kDa protein, chloroplastic"/>
    <property type="match status" value="1"/>
</dbReference>
<dbReference type="Gene3D" id="1.10.520.10">
    <property type="match status" value="1"/>
</dbReference>
<dbReference type="Gene3D" id="1.20.58.1620">
    <property type="match status" value="1"/>
</dbReference>
<dbReference type="InterPro" id="IPR044831">
    <property type="entry name" value="Ccp1-like"/>
</dbReference>
<dbReference type="InterPro" id="IPR002016">
    <property type="entry name" value="Haem_peroxidase"/>
</dbReference>
<dbReference type="InterPro" id="IPR010255">
    <property type="entry name" value="Haem_peroxidase_sf"/>
</dbReference>
<dbReference type="InterPro" id="IPR002207">
    <property type="entry name" value="Peroxidase_I"/>
</dbReference>
<dbReference type="PANTHER" id="PTHR31356:SF34">
    <property type="entry name" value="THYLAKOID LUMENAL 29 KDA PROTEIN, CHLOROPLASTIC"/>
    <property type="match status" value="1"/>
</dbReference>
<dbReference type="PANTHER" id="PTHR31356">
    <property type="entry name" value="THYLAKOID LUMENAL 29 KDA PROTEIN, CHLOROPLASTIC-RELATED"/>
    <property type="match status" value="1"/>
</dbReference>
<dbReference type="Pfam" id="PF00141">
    <property type="entry name" value="peroxidase"/>
    <property type="match status" value="1"/>
</dbReference>
<dbReference type="PRINTS" id="PR00459">
    <property type="entry name" value="ASPEROXIDASE"/>
</dbReference>
<dbReference type="SUPFAM" id="SSF48113">
    <property type="entry name" value="Heme-dependent peroxidases"/>
    <property type="match status" value="1"/>
</dbReference>